<protein>
    <recommendedName>
        <fullName evidence="1">Small ribosomal subunit protein bS16</fullName>
    </recommendedName>
    <alternativeName>
        <fullName evidence="2">30S ribosomal protein S16</fullName>
    </alternativeName>
</protein>
<evidence type="ECO:0000255" key="1">
    <source>
        <dbReference type="HAMAP-Rule" id="MF_00385"/>
    </source>
</evidence>
<evidence type="ECO:0000305" key="2"/>
<keyword id="KW-0687">Ribonucleoprotein</keyword>
<keyword id="KW-0689">Ribosomal protein</keyword>
<accession>B7MYP8</accession>
<feature type="chain" id="PRO_1000196405" description="Small ribosomal subunit protein bS16">
    <location>
        <begin position="1"/>
        <end position="82"/>
    </location>
</feature>
<proteinExistence type="inferred from homology"/>
<comment type="similarity">
    <text evidence="1">Belongs to the bacterial ribosomal protein bS16 family.</text>
</comment>
<organism>
    <name type="scientific">Escherichia coli O81 (strain ED1a)</name>
    <dbReference type="NCBI Taxonomy" id="585397"/>
    <lineage>
        <taxon>Bacteria</taxon>
        <taxon>Pseudomonadati</taxon>
        <taxon>Pseudomonadota</taxon>
        <taxon>Gammaproteobacteria</taxon>
        <taxon>Enterobacterales</taxon>
        <taxon>Enterobacteriaceae</taxon>
        <taxon>Escherichia</taxon>
    </lineage>
</organism>
<dbReference type="EMBL" id="CU928162">
    <property type="protein sequence ID" value="CAR09215.2"/>
    <property type="molecule type" value="Genomic_DNA"/>
</dbReference>
<dbReference type="RefSeq" id="WP_000256450.1">
    <property type="nucleotide sequence ID" value="NC_011745.1"/>
</dbReference>
<dbReference type="SMR" id="B7MYP8"/>
<dbReference type="GeneID" id="93774459"/>
<dbReference type="KEGG" id="ecq:ECED1_3048"/>
<dbReference type="HOGENOM" id="CLU_100590_5_1_6"/>
<dbReference type="Proteomes" id="UP000000748">
    <property type="component" value="Chromosome"/>
</dbReference>
<dbReference type="GO" id="GO:0005737">
    <property type="term" value="C:cytoplasm"/>
    <property type="evidence" value="ECO:0007669"/>
    <property type="project" value="UniProtKB-ARBA"/>
</dbReference>
<dbReference type="GO" id="GO:0015935">
    <property type="term" value="C:small ribosomal subunit"/>
    <property type="evidence" value="ECO:0007669"/>
    <property type="project" value="TreeGrafter"/>
</dbReference>
<dbReference type="GO" id="GO:0003735">
    <property type="term" value="F:structural constituent of ribosome"/>
    <property type="evidence" value="ECO:0007669"/>
    <property type="project" value="InterPro"/>
</dbReference>
<dbReference type="GO" id="GO:0006412">
    <property type="term" value="P:translation"/>
    <property type="evidence" value="ECO:0007669"/>
    <property type="project" value="UniProtKB-UniRule"/>
</dbReference>
<dbReference type="FunFam" id="3.30.1320.10:FF:000001">
    <property type="entry name" value="30S ribosomal protein S16"/>
    <property type="match status" value="1"/>
</dbReference>
<dbReference type="Gene3D" id="3.30.1320.10">
    <property type="match status" value="1"/>
</dbReference>
<dbReference type="HAMAP" id="MF_00385">
    <property type="entry name" value="Ribosomal_bS16"/>
    <property type="match status" value="1"/>
</dbReference>
<dbReference type="InterPro" id="IPR000307">
    <property type="entry name" value="Ribosomal_bS16"/>
</dbReference>
<dbReference type="InterPro" id="IPR020592">
    <property type="entry name" value="Ribosomal_bS16_CS"/>
</dbReference>
<dbReference type="InterPro" id="IPR023803">
    <property type="entry name" value="Ribosomal_bS16_dom_sf"/>
</dbReference>
<dbReference type="NCBIfam" id="TIGR00002">
    <property type="entry name" value="S16"/>
    <property type="match status" value="1"/>
</dbReference>
<dbReference type="PANTHER" id="PTHR12919">
    <property type="entry name" value="30S RIBOSOMAL PROTEIN S16"/>
    <property type="match status" value="1"/>
</dbReference>
<dbReference type="PANTHER" id="PTHR12919:SF20">
    <property type="entry name" value="SMALL RIBOSOMAL SUBUNIT PROTEIN BS16M"/>
    <property type="match status" value="1"/>
</dbReference>
<dbReference type="Pfam" id="PF00886">
    <property type="entry name" value="Ribosomal_S16"/>
    <property type="match status" value="1"/>
</dbReference>
<dbReference type="SUPFAM" id="SSF54565">
    <property type="entry name" value="Ribosomal protein S16"/>
    <property type="match status" value="1"/>
</dbReference>
<dbReference type="PROSITE" id="PS00732">
    <property type="entry name" value="RIBOSOMAL_S16"/>
    <property type="match status" value="1"/>
</dbReference>
<gene>
    <name evidence="1" type="primary">rpsP</name>
    <name type="ordered locus">ECED1_3048</name>
</gene>
<name>RS16_ECO81</name>
<reference key="1">
    <citation type="journal article" date="2009" name="PLoS Genet.">
        <title>Organised genome dynamics in the Escherichia coli species results in highly diverse adaptive paths.</title>
        <authorList>
            <person name="Touchon M."/>
            <person name="Hoede C."/>
            <person name="Tenaillon O."/>
            <person name="Barbe V."/>
            <person name="Baeriswyl S."/>
            <person name="Bidet P."/>
            <person name="Bingen E."/>
            <person name="Bonacorsi S."/>
            <person name="Bouchier C."/>
            <person name="Bouvet O."/>
            <person name="Calteau A."/>
            <person name="Chiapello H."/>
            <person name="Clermont O."/>
            <person name="Cruveiller S."/>
            <person name="Danchin A."/>
            <person name="Diard M."/>
            <person name="Dossat C."/>
            <person name="Karoui M.E."/>
            <person name="Frapy E."/>
            <person name="Garry L."/>
            <person name="Ghigo J.M."/>
            <person name="Gilles A.M."/>
            <person name="Johnson J."/>
            <person name="Le Bouguenec C."/>
            <person name="Lescat M."/>
            <person name="Mangenot S."/>
            <person name="Martinez-Jehanne V."/>
            <person name="Matic I."/>
            <person name="Nassif X."/>
            <person name="Oztas S."/>
            <person name="Petit M.A."/>
            <person name="Pichon C."/>
            <person name="Rouy Z."/>
            <person name="Ruf C.S."/>
            <person name="Schneider D."/>
            <person name="Tourret J."/>
            <person name="Vacherie B."/>
            <person name="Vallenet D."/>
            <person name="Medigue C."/>
            <person name="Rocha E.P.C."/>
            <person name="Denamur E."/>
        </authorList>
    </citation>
    <scope>NUCLEOTIDE SEQUENCE [LARGE SCALE GENOMIC DNA]</scope>
    <source>
        <strain>ED1a</strain>
    </source>
</reference>
<sequence>MVTIRLARHGAKKRPFYQVVVADSRNARNGRFIERVGFFNPIASEKEEGTRLDLDRIAHWVGQGATISDRVAALIKEVNKAA</sequence>